<reference key="1">
    <citation type="journal article" date="2006" name="Nat. Biotechnol.">
        <title>Complete genome of the mutualistic, N2-fixing grass endophyte Azoarcus sp. strain BH72.</title>
        <authorList>
            <person name="Krause A."/>
            <person name="Ramakumar A."/>
            <person name="Bartels D."/>
            <person name="Battistoni F."/>
            <person name="Bekel T."/>
            <person name="Boch J."/>
            <person name="Boehm M."/>
            <person name="Friedrich F."/>
            <person name="Hurek T."/>
            <person name="Krause L."/>
            <person name="Linke B."/>
            <person name="McHardy A.C."/>
            <person name="Sarkar A."/>
            <person name="Schneiker S."/>
            <person name="Syed A.A."/>
            <person name="Thauer R."/>
            <person name="Vorhoelter F.-J."/>
            <person name="Weidner S."/>
            <person name="Puehler A."/>
            <person name="Reinhold-Hurek B."/>
            <person name="Kaiser O."/>
            <person name="Goesmann A."/>
        </authorList>
    </citation>
    <scope>NUCLEOTIDE SEQUENCE [LARGE SCALE GENOMIC DNA]</scope>
    <source>
        <strain>BH72</strain>
    </source>
</reference>
<evidence type="ECO:0000255" key="1">
    <source>
        <dbReference type="HAMAP-Rule" id="MF_00262"/>
    </source>
</evidence>
<accession>A1K616</accession>
<organism>
    <name type="scientific">Azoarcus sp. (strain BH72)</name>
    <dbReference type="NCBI Taxonomy" id="418699"/>
    <lineage>
        <taxon>Bacteria</taxon>
        <taxon>Pseudomonadati</taxon>
        <taxon>Pseudomonadota</taxon>
        <taxon>Betaproteobacteria</taxon>
        <taxon>Rhodocyclales</taxon>
        <taxon>Zoogloeaceae</taxon>
        <taxon>Azoarcus</taxon>
    </lineage>
</organism>
<feature type="chain" id="PRO_0000298071" description="Cell division topological specificity factor">
    <location>
        <begin position="1"/>
        <end position="86"/>
    </location>
</feature>
<gene>
    <name evidence="1" type="primary">minE</name>
    <name type="ordered locus">azo1654</name>
</gene>
<sequence length="86" mass="9521">MSLLARLFGEKKKTAEIAKNRLSLLIAHERSGGAGTADFLPALQKDLIDVISKYVNVNPDDIKVQLDKQDNVEVLEVNIVLPEHGR</sequence>
<keyword id="KW-0131">Cell cycle</keyword>
<keyword id="KW-0132">Cell division</keyword>
<keyword id="KW-1185">Reference proteome</keyword>
<protein>
    <recommendedName>
        <fullName evidence="1">Cell division topological specificity factor</fullName>
    </recommendedName>
</protein>
<comment type="function">
    <text evidence="1">Prevents the cell division inhibition by proteins MinC and MinD at internal division sites while permitting inhibition at polar sites. This ensures cell division at the proper site by restricting the formation of a division septum at the midpoint of the long axis of the cell.</text>
</comment>
<comment type="similarity">
    <text evidence="1">Belongs to the MinE family.</text>
</comment>
<proteinExistence type="inferred from homology"/>
<name>MINE_AZOSB</name>
<dbReference type="EMBL" id="AM406670">
    <property type="protein sequence ID" value="CAL94271.1"/>
    <property type="molecule type" value="Genomic_DNA"/>
</dbReference>
<dbReference type="RefSeq" id="WP_011765387.1">
    <property type="nucleotide sequence ID" value="NC_008702.1"/>
</dbReference>
<dbReference type="SMR" id="A1K616"/>
<dbReference type="STRING" id="62928.azo1654"/>
<dbReference type="KEGG" id="aoa:dqs_1804"/>
<dbReference type="KEGG" id="azo:azo1654"/>
<dbReference type="eggNOG" id="COG0851">
    <property type="taxonomic scope" value="Bacteria"/>
</dbReference>
<dbReference type="HOGENOM" id="CLU_137929_2_1_4"/>
<dbReference type="OrthoDB" id="9802655at2"/>
<dbReference type="Proteomes" id="UP000002588">
    <property type="component" value="Chromosome"/>
</dbReference>
<dbReference type="GO" id="GO:0051301">
    <property type="term" value="P:cell division"/>
    <property type="evidence" value="ECO:0007669"/>
    <property type="project" value="UniProtKB-KW"/>
</dbReference>
<dbReference type="GO" id="GO:0032955">
    <property type="term" value="P:regulation of division septum assembly"/>
    <property type="evidence" value="ECO:0007669"/>
    <property type="project" value="InterPro"/>
</dbReference>
<dbReference type="FunFam" id="3.30.1070.10:FF:000001">
    <property type="entry name" value="Cell division topological specificity factor"/>
    <property type="match status" value="1"/>
</dbReference>
<dbReference type="Gene3D" id="3.30.1070.10">
    <property type="entry name" value="Cell division topological specificity factor MinE"/>
    <property type="match status" value="1"/>
</dbReference>
<dbReference type="HAMAP" id="MF_00262">
    <property type="entry name" value="MinE"/>
    <property type="match status" value="1"/>
</dbReference>
<dbReference type="InterPro" id="IPR005527">
    <property type="entry name" value="MinE"/>
</dbReference>
<dbReference type="InterPro" id="IPR036707">
    <property type="entry name" value="MinE_sf"/>
</dbReference>
<dbReference type="NCBIfam" id="TIGR01215">
    <property type="entry name" value="minE"/>
    <property type="match status" value="1"/>
</dbReference>
<dbReference type="NCBIfam" id="NF001422">
    <property type="entry name" value="PRK00296.1"/>
    <property type="match status" value="1"/>
</dbReference>
<dbReference type="NCBIfam" id="NF010595">
    <property type="entry name" value="PRK13989.1"/>
    <property type="match status" value="1"/>
</dbReference>
<dbReference type="Pfam" id="PF03776">
    <property type="entry name" value="MinE"/>
    <property type="match status" value="1"/>
</dbReference>
<dbReference type="SUPFAM" id="SSF55229">
    <property type="entry name" value="Cell division protein MinE topological specificity domain"/>
    <property type="match status" value="1"/>
</dbReference>